<comment type="similarity">
    <text evidence="1">Belongs to the bacterial ribosomal protein bL35 family.</text>
</comment>
<dbReference type="EMBL" id="AE001437">
    <property type="protein sequence ID" value="AAK80316.1"/>
    <property type="molecule type" value="Genomic_DNA"/>
</dbReference>
<dbReference type="PIR" id="A97191">
    <property type="entry name" value="A97191"/>
</dbReference>
<dbReference type="RefSeq" id="NP_348976.1">
    <property type="nucleotide sequence ID" value="NC_003030.1"/>
</dbReference>
<dbReference type="RefSeq" id="WP_010965657.1">
    <property type="nucleotide sequence ID" value="NC_003030.1"/>
</dbReference>
<dbReference type="SMR" id="Q97GK6"/>
<dbReference type="STRING" id="272562.CA_C2360"/>
<dbReference type="GeneID" id="44998835"/>
<dbReference type="KEGG" id="cac:CA_C2360"/>
<dbReference type="PATRIC" id="fig|272562.8.peg.2556"/>
<dbReference type="eggNOG" id="COG0291">
    <property type="taxonomic scope" value="Bacteria"/>
</dbReference>
<dbReference type="HOGENOM" id="CLU_169643_3_0_9"/>
<dbReference type="OrthoDB" id="47476at2"/>
<dbReference type="Proteomes" id="UP000000814">
    <property type="component" value="Chromosome"/>
</dbReference>
<dbReference type="GO" id="GO:0022625">
    <property type="term" value="C:cytosolic large ribosomal subunit"/>
    <property type="evidence" value="ECO:0007669"/>
    <property type="project" value="TreeGrafter"/>
</dbReference>
<dbReference type="GO" id="GO:0003735">
    <property type="term" value="F:structural constituent of ribosome"/>
    <property type="evidence" value="ECO:0007669"/>
    <property type="project" value="InterPro"/>
</dbReference>
<dbReference type="GO" id="GO:0006412">
    <property type="term" value="P:translation"/>
    <property type="evidence" value="ECO:0007669"/>
    <property type="project" value="UniProtKB-UniRule"/>
</dbReference>
<dbReference type="FunFam" id="4.10.410.60:FF:000001">
    <property type="entry name" value="50S ribosomal protein L35"/>
    <property type="match status" value="1"/>
</dbReference>
<dbReference type="Gene3D" id="4.10.410.60">
    <property type="match status" value="1"/>
</dbReference>
<dbReference type="HAMAP" id="MF_00514">
    <property type="entry name" value="Ribosomal_bL35"/>
    <property type="match status" value="1"/>
</dbReference>
<dbReference type="InterPro" id="IPR001706">
    <property type="entry name" value="Ribosomal_bL35"/>
</dbReference>
<dbReference type="InterPro" id="IPR021137">
    <property type="entry name" value="Ribosomal_bL35-like"/>
</dbReference>
<dbReference type="InterPro" id="IPR018265">
    <property type="entry name" value="Ribosomal_bL35_CS"/>
</dbReference>
<dbReference type="InterPro" id="IPR037229">
    <property type="entry name" value="Ribosomal_bL35_sf"/>
</dbReference>
<dbReference type="NCBIfam" id="TIGR00001">
    <property type="entry name" value="rpmI_bact"/>
    <property type="match status" value="1"/>
</dbReference>
<dbReference type="PANTHER" id="PTHR33343">
    <property type="entry name" value="54S RIBOSOMAL PROTEIN BL35M"/>
    <property type="match status" value="1"/>
</dbReference>
<dbReference type="PANTHER" id="PTHR33343:SF1">
    <property type="entry name" value="LARGE RIBOSOMAL SUBUNIT PROTEIN BL35M"/>
    <property type="match status" value="1"/>
</dbReference>
<dbReference type="Pfam" id="PF01632">
    <property type="entry name" value="Ribosomal_L35p"/>
    <property type="match status" value="1"/>
</dbReference>
<dbReference type="PRINTS" id="PR00064">
    <property type="entry name" value="RIBOSOMALL35"/>
</dbReference>
<dbReference type="SUPFAM" id="SSF143034">
    <property type="entry name" value="L35p-like"/>
    <property type="match status" value="1"/>
</dbReference>
<dbReference type="PROSITE" id="PS00936">
    <property type="entry name" value="RIBOSOMAL_L35"/>
    <property type="match status" value="1"/>
</dbReference>
<name>RL35_CLOAB</name>
<protein>
    <recommendedName>
        <fullName evidence="1">Large ribosomal subunit protein bL35</fullName>
    </recommendedName>
    <alternativeName>
        <fullName evidence="2">50S ribosomal protein L35</fullName>
    </alternativeName>
</protein>
<proteinExistence type="inferred from homology"/>
<feature type="chain" id="PRO_0000177351" description="Large ribosomal subunit protein bL35">
    <location>
        <begin position="1"/>
        <end position="65"/>
    </location>
</feature>
<evidence type="ECO:0000255" key="1">
    <source>
        <dbReference type="HAMAP-Rule" id="MF_00514"/>
    </source>
</evidence>
<evidence type="ECO:0000305" key="2"/>
<reference key="1">
    <citation type="journal article" date="2001" name="J. Bacteriol.">
        <title>Genome sequence and comparative analysis of the solvent-producing bacterium Clostridium acetobutylicum.</title>
        <authorList>
            <person name="Noelling J."/>
            <person name="Breton G."/>
            <person name="Omelchenko M.V."/>
            <person name="Makarova K.S."/>
            <person name="Zeng Q."/>
            <person name="Gibson R."/>
            <person name="Lee H.M."/>
            <person name="Dubois J."/>
            <person name="Qiu D."/>
            <person name="Hitti J."/>
            <person name="Wolf Y.I."/>
            <person name="Tatusov R.L."/>
            <person name="Sabathe F."/>
            <person name="Doucette-Stamm L.A."/>
            <person name="Soucaille P."/>
            <person name="Daly M.J."/>
            <person name="Bennett G.N."/>
            <person name="Koonin E.V."/>
            <person name="Smith D.R."/>
        </authorList>
    </citation>
    <scope>NUCLEOTIDE SEQUENCE [LARGE SCALE GENOMIC DNA]</scope>
    <source>
        <strain>ATCC 824 / DSM 792 / JCM 1419 / IAM 19013 / LMG 5710 / NBRC 13948 / NRRL B-527 / VKM B-1787 / 2291 / W</strain>
    </source>
</reference>
<gene>
    <name evidence="1" type="primary">rpmI</name>
    <name type="ordered locus">CA_C2360</name>
</gene>
<keyword id="KW-1185">Reference proteome</keyword>
<keyword id="KW-0687">Ribonucleoprotein</keyword>
<keyword id="KW-0689">Ribosomal protein</keyword>
<accession>Q97GK6</accession>
<sequence>MPKMKTKKAAAKRFKATGTGKLKRGKAFRSHILTKKSTKTKRNLRKGGYVSETQEKTMKTLLPYL</sequence>
<organism>
    <name type="scientific">Clostridium acetobutylicum (strain ATCC 824 / DSM 792 / JCM 1419 / IAM 19013 / LMG 5710 / NBRC 13948 / NRRL B-527 / VKM B-1787 / 2291 / W)</name>
    <dbReference type="NCBI Taxonomy" id="272562"/>
    <lineage>
        <taxon>Bacteria</taxon>
        <taxon>Bacillati</taxon>
        <taxon>Bacillota</taxon>
        <taxon>Clostridia</taxon>
        <taxon>Eubacteriales</taxon>
        <taxon>Clostridiaceae</taxon>
        <taxon>Clostridium</taxon>
    </lineage>
</organism>